<protein>
    <recommendedName>
        <fullName evidence="1">UPF0352 protein Patl_3379</fullName>
    </recommendedName>
</protein>
<name>Y3379_PSEA6</name>
<dbReference type="EMBL" id="CP000388">
    <property type="protein sequence ID" value="ABG41885.1"/>
    <property type="molecule type" value="Genomic_DNA"/>
</dbReference>
<dbReference type="RefSeq" id="WP_006994434.1">
    <property type="nucleotide sequence ID" value="NC_008228.1"/>
</dbReference>
<dbReference type="SMR" id="Q15QF3"/>
<dbReference type="STRING" id="342610.Patl_3379"/>
<dbReference type="KEGG" id="pat:Patl_3379"/>
<dbReference type="eggNOG" id="COG3082">
    <property type="taxonomic scope" value="Bacteria"/>
</dbReference>
<dbReference type="HOGENOM" id="CLU_175457_0_0_6"/>
<dbReference type="OrthoDB" id="5771474at2"/>
<dbReference type="Proteomes" id="UP000001981">
    <property type="component" value="Chromosome"/>
</dbReference>
<dbReference type="Gene3D" id="1.10.3390.10">
    <property type="entry name" value="YejL-like"/>
    <property type="match status" value="1"/>
</dbReference>
<dbReference type="HAMAP" id="MF_00816">
    <property type="entry name" value="UPF0352"/>
    <property type="match status" value="1"/>
</dbReference>
<dbReference type="InterPro" id="IPR009857">
    <property type="entry name" value="UPF0352"/>
</dbReference>
<dbReference type="InterPro" id="IPR023202">
    <property type="entry name" value="YejL_sf"/>
</dbReference>
<dbReference type="NCBIfam" id="NF010242">
    <property type="entry name" value="PRK13689.1"/>
    <property type="match status" value="1"/>
</dbReference>
<dbReference type="Pfam" id="PF07208">
    <property type="entry name" value="DUF1414"/>
    <property type="match status" value="1"/>
</dbReference>
<dbReference type="PIRSF" id="PIRSF006188">
    <property type="entry name" value="UCP006188"/>
    <property type="match status" value="1"/>
</dbReference>
<dbReference type="SUPFAM" id="SSF158651">
    <property type="entry name" value="YejL-like"/>
    <property type="match status" value="1"/>
</dbReference>
<comment type="similarity">
    <text evidence="1">Belongs to the UPF0352 family.</text>
</comment>
<gene>
    <name type="ordered locus">Patl_3379</name>
</gene>
<evidence type="ECO:0000255" key="1">
    <source>
        <dbReference type="HAMAP-Rule" id="MF_00816"/>
    </source>
</evidence>
<proteinExistence type="inferred from homology"/>
<organism>
    <name type="scientific">Pseudoalteromonas atlantica (strain T6c / ATCC BAA-1087)</name>
    <dbReference type="NCBI Taxonomy" id="3042615"/>
    <lineage>
        <taxon>Bacteria</taxon>
        <taxon>Pseudomonadati</taxon>
        <taxon>Pseudomonadota</taxon>
        <taxon>Gammaproteobacteria</taxon>
        <taxon>Alteromonadales</taxon>
        <taxon>Alteromonadaceae</taxon>
        <taxon>Paraglaciecola</taxon>
    </lineage>
</organism>
<reference key="1">
    <citation type="submission" date="2006-06" db="EMBL/GenBank/DDBJ databases">
        <title>Complete sequence of Pseudoalteromonas atlantica T6c.</title>
        <authorList>
            <consortium name="US DOE Joint Genome Institute"/>
            <person name="Copeland A."/>
            <person name="Lucas S."/>
            <person name="Lapidus A."/>
            <person name="Barry K."/>
            <person name="Detter J.C."/>
            <person name="Glavina del Rio T."/>
            <person name="Hammon N."/>
            <person name="Israni S."/>
            <person name="Dalin E."/>
            <person name="Tice H."/>
            <person name="Pitluck S."/>
            <person name="Saunders E."/>
            <person name="Brettin T."/>
            <person name="Bruce D."/>
            <person name="Han C."/>
            <person name="Tapia R."/>
            <person name="Gilna P."/>
            <person name="Schmutz J."/>
            <person name="Larimer F."/>
            <person name="Land M."/>
            <person name="Hauser L."/>
            <person name="Kyrpides N."/>
            <person name="Kim E."/>
            <person name="Karls A.C."/>
            <person name="Bartlett D."/>
            <person name="Higgins B.P."/>
            <person name="Richardson P."/>
        </authorList>
    </citation>
    <scope>NUCLEOTIDE SEQUENCE [LARGE SCALE GENOMIC DNA]</scope>
    <source>
        <strain>T6c / ATCC BAA-1087</strain>
    </source>
</reference>
<feature type="chain" id="PRO_1000062310" description="UPF0352 protein Patl_3379">
    <location>
        <begin position="1"/>
        <end position="72"/>
    </location>
</feature>
<sequence>MPQNSKYSDTQFENVMHDIIIALEKHQASRDLSLMALGNVITNIFMQQVNESQRSEMADKFTQVLLKSINAK</sequence>
<accession>Q15QF3</accession>